<reference key="1">
    <citation type="journal article" date="1997" name="J. Gen. Appl. Microbiol.">
        <title>Phylogenetical relationship based on groE genes among phenotypically related Enterobacter, Pantoea, Klebsiella, Serratia, and Erwinia species.</title>
        <authorList>
            <person name="Harada H."/>
            <person name="Ishikawa H."/>
        </authorList>
    </citation>
    <scope>NUCLEOTIDE SEQUENCE [GENOMIC DNA]</scope>
    <source>
        <strain>ATCC 33110 / CUETM 77-130 / DSM 4581 / JCM 1238 / LMG 2785</strain>
    </source>
</reference>
<feature type="chain" id="PRO_0000063373" description="Chaperonin GroEL">
    <location>
        <begin position="1"/>
        <end position="539" status="greater than"/>
    </location>
</feature>
<feature type="binding site" evidence="1">
    <location>
        <begin position="30"/>
        <end position="33"/>
    </location>
    <ligand>
        <name>ATP</name>
        <dbReference type="ChEBI" id="CHEBI:30616"/>
    </ligand>
</feature>
<feature type="binding site" evidence="1">
    <location>
        <position position="51"/>
    </location>
    <ligand>
        <name>ATP</name>
        <dbReference type="ChEBI" id="CHEBI:30616"/>
    </ligand>
</feature>
<feature type="binding site" evidence="1">
    <location>
        <begin position="87"/>
        <end position="91"/>
    </location>
    <ligand>
        <name>ATP</name>
        <dbReference type="ChEBI" id="CHEBI:30616"/>
    </ligand>
</feature>
<feature type="binding site" evidence="1">
    <location>
        <position position="415"/>
    </location>
    <ligand>
        <name>ATP</name>
        <dbReference type="ChEBI" id="CHEBI:30616"/>
    </ligand>
</feature>
<feature type="binding site" evidence="1">
    <location>
        <begin position="479"/>
        <end position="481"/>
    </location>
    <ligand>
        <name>ATP</name>
        <dbReference type="ChEBI" id="CHEBI:30616"/>
    </ligand>
</feature>
<feature type="binding site" evidence="1">
    <location>
        <position position="495"/>
    </location>
    <ligand>
        <name>ATP</name>
        <dbReference type="ChEBI" id="CHEBI:30616"/>
    </ligand>
</feature>
<feature type="non-terminal residue">
    <location>
        <position position="539"/>
    </location>
</feature>
<dbReference type="EC" id="5.6.1.7" evidence="1"/>
<dbReference type="EMBL" id="AB008138">
    <property type="protein sequence ID" value="BAA25209.1"/>
    <property type="molecule type" value="Genomic_DNA"/>
</dbReference>
<dbReference type="SMR" id="O66192"/>
<dbReference type="STRING" id="61648.AB182_23050"/>
<dbReference type="GO" id="GO:0005737">
    <property type="term" value="C:cytoplasm"/>
    <property type="evidence" value="ECO:0007669"/>
    <property type="project" value="UniProtKB-SubCell"/>
</dbReference>
<dbReference type="GO" id="GO:0005524">
    <property type="term" value="F:ATP binding"/>
    <property type="evidence" value="ECO:0007669"/>
    <property type="project" value="UniProtKB-KW"/>
</dbReference>
<dbReference type="GO" id="GO:0140662">
    <property type="term" value="F:ATP-dependent protein folding chaperone"/>
    <property type="evidence" value="ECO:0007669"/>
    <property type="project" value="InterPro"/>
</dbReference>
<dbReference type="GO" id="GO:0016853">
    <property type="term" value="F:isomerase activity"/>
    <property type="evidence" value="ECO:0007669"/>
    <property type="project" value="UniProtKB-KW"/>
</dbReference>
<dbReference type="GO" id="GO:0042026">
    <property type="term" value="P:protein refolding"/>
    <property type="evidence" value="ECO:0007669"/>
    <property type="project" value="InterPro"/>
</dbReference>
<dbReference type="CDD" id="cd03344">
    <property type="entry name" value="GroEL"/>
    <property type="match status" value="1"/>
</dbReference>
<dbReference type="FunFam" id="1.10.560.10:FF:000001">
    <property type="entry name" value="60 kDa chaperonin"/>
    <property type="match status" value="1"/>
</dbReference>
<dbReference type="FunFam" id="3.50.7.10:FF:000001">
    <property type="entry name" value="60 kDa chaperonin"/>
    <property type="match status" value="1"/>
</dbReference>
<dbReference type="Gene3D" id="3.50.7.10">
    <property type="entry name" value="GroEL"/>
    <property type="match status" value="1"/>
</dbReference>
<dbReference type="Gene3D" id="1.10.560.10">
    <property type="entry name" value="GroEL-like equatorial domain"/>
    <property type="match status" value="1"/>
</dbReference>
<dbReference type="Gene3D" id="3.30.260.10">
    <property type="entry name" value="TCP-1-like chaperonin intermediate domain"/>
    <property type="match status" value="1"/>
</dbReference>
<dbReference type="HAMAP" id="MF_00600">
    <property type="entry name" value="CH60"/>
    <property type="match status" value="1"/>
</dbReference>
<dbReference type="InterPro" id="IPR018370">
    <property type="entry name" value="Chaperonin_Cpn60_CS"/>
</dbReference>
<dbReference type="InterPro" id="IPR001844">
    <property type="entry name" value="Cpn60/GroEL"/>
</dbReference>
<dbReference type="InterPro" id="IPR002423">
    <property type="entry name" value="Cpn60/GroEL/TCP-1"/>
</dbReference>
<dbReference type="InterPro" id="IPR027409">
    <property type="entry name" value="GroEL-like_apical_dom_sf"/>
</dbReference>
<dbReference type="InterPro" id="IPR027413">
    <property type="entry name" value="GROEL-like_equatorial_sf"/>
</dbReference>
<dbReference type="InterPro" id="IPR027410">
    <property type="entry name" value="TCP-1-like_intermed_sf"/>
</dbReference>
<dbReference type="NCBIfam" id="TIGR02348">
    <property type="entry name" value="GroEL"/>
    <property type="match status" value="1"/>
</dbReference>
<dbReference type="NCBIfam" id="NF000592">
    <property type="entry name" value="PRK00013.1"/>
    <property type="match status" value="1"/>
</dbReference>
<dbReference type="NCBIfam" id="NF009487">
    <property type="entry name" value="PRK12849.1"/>
    <property type="match status" value="1"/>
</dbReference>
<dbReference type="NCBIfam" id="NF009488">
    <property type="entry name" value="PRK12850.1"/>
    <property type="match status" value="1"/>
</dbReference>
<dbReference type="NCBIfam" id="NF009489">
    <property type="entry name" value="PRK12851.1"/>
    <property type="match status" value="1"/>
</dbReference>
<dbReference type="PANTHER" id="PTHR45633">
    <property type="entry name" value="60 KDA HEAT SHOCK PROTEIN, MITOCHONDRIAL"/>
    <property type="match status" value="1"/>
</dbReference>
<dbReference type="Pfam" id="PF00118">
    <property type="entry name" value="Cpn60_TCP1"/>
    <property type="match status" value="1"/>
</dbReference>
<dbReference type="PRINTS" id="PR00298">
    <property type="entry name" value="CHAPERONIN60"/>
</dbReference>
<dbReference type="SUPFAM" id="SSF52029">
    <property type="entry name" value="GroEL apical domain-like"/>
    <property type="match status" value="1"/>
</dbReference>
<dbReference type="SUPFAM" id="SSF48592">
    <property type="entry name" value="GroEL equatorial domain-like"/>
    <property type="match status" value="1"/>
</dbReference>
<dbReference type="SUPFAM" id="SSF54849">
    <property type="entry name" value="GroEL-intermediate domain like"/>
    <property type="match status" value="1"/>
</dbReference>
<dbReference type="PROSITE" id="PS00296">
    <property type="entry name" value="CHAPERONINS_CPN60"/>
    <property type="match status" value="1"/>
</dbReference>
<accession>O66192</accession>
<comment type="function">
    <text evidence="1">Together with its co-chaperonin GroES, plays an essential role in assisting protein folding. The GroEL-GroES system forms a nano-cage that allows encapsulation of the non-native substrate proteins and provides a physical environment optimized to promote and accelerate protein folding.</text>
</comment>
<comment type="catalytic activity">
    <reaction evidence="1">
        <text>ATP + H2O + a folded polypeptide = ADP + phosphate + an unfolded polypeptide.</text>
        <dbReference type="EC" id="5.6.1.7"/>
    </reaction>
</comment>
<comment type="subunit">
    <text evidence="1">Forms a cylinder of 14 subunits composed of two heptameric rings stacked back-to-back. Interacts with the co-chaperonin GroES.</text>
</comment>
<comment type="subcellular location">
    <subcellularLocation>
        <location evidence="1">Cytoplasm</location>
    </subcellularLocation>
</comment>
<comment type="similarity">
    <text evidence="1">Belongs to the chaperonin (HSP60) family.</text>
</comment>
<organism>
    <name type="scientific">Kluyvera intermedia</name>
    <name type="common">Enterobacter intermedius</name>
    <dbReference type="NCBI Taxonomy" id="61648"/>
    <lineage>
        <taxon>Bacteria</taxon>
        <taxon>Pseudomonadati</taxon>
        <taxon>Pseudomonadota</taxon>
        <taxon>Gammaproteobacteria</taxon>
        <taxon>Enterobacterales</taxon>
        <taxon>Enterobacteriaceae</taxon>
        <taxon>Kluyvera</taxon>
    </lineage>
</organism>
<keyword id="KW-0067">ATP-binding</keyword>
<keyword id="KW-0143">Chaperone</keyword>
<keyword id="KW-0963">Cytoplasm</keyword>
<keyword id="KW-0413">Isomerase</keyword>
<keyword id="KW-0547">Nucleotide-binding</keyword>
<evidence type="ECO:0000255" key="1">
    <source>
        <dbReference type="HAMAP-Rule" id="MF_00600"/>
    </source>
</evidence>
<gene>
    <name evidence="1" type="primary">groEL</name>
    <name evidence="1" type="synonym">groL</name>
    <name type="synonym">mopA</name>
</gene>
<sequence>MAAKDVKFGNDARVKMLRGVNVLADAVKVTLGPKGRNVVLDKSFGAPTITKDGVSVAREIELEDKFENMGAQMVKEVASKANDAAGDGTTTATVLAQSIIAEGLKAVAAGMNPMDLKRGIDKAVVAAVEELKALSVPCSDSKAIAQVGTISANSDETVGKLIAEAMDKVGKEGVITVEDGTGLEDELDVVEGMQFDRGYLSPYFINKPETGAVELESPFILLADKKISNIREMLPVLEAVAKAGKPLLIIAEDVEGEALATLVVNTMRGIVKVAAVKAPGFGDRRKAMLQDIATLTGGTVISEEIGMELEKATLEDMGQAKRVVINKDTTTIIDGVGEEAAIQGRVAQIRKQIEEATSDYDREKLQERVAKLAGGVAVIKVGAATEVEMKEKKARVDDALHATRAAVEEGVVAGGGVALIRVASKLSNLRGQNEDQNVGIKVALRAMEAPLRQIVLNCGEEPSVVANTVKAGDGNYGYNAATEEYGNMIDMGILDPTKVTRSALQYAASVAGLMITTECMVTDLPKGDAPDLRAAGMGG</sequence>
<protein>
    <recommendedName>
        <fullName evidence="1">Chaperonin GroEL</fullName>
        <ecNumber evidence="1">5.6.1.7</ecNumber>
    </recommendedName>
    <alternativeName>
        <fullName evidence="1">60 kDa chaperonin</fullName>
    </alternativeName>
    <alternativeName>
        <fullName evidence="1">Chaperonin-60</fullName>
        <shortName evidence="1">Cpn60</shortName>
    </alternativeName>
</protein>
<name>CH60_KLUIN</name>
<proteinExistence type="inferred from homology"/>